<name>KLFL_DROME</name>
<protein>
    <recommendedName>
        <fullName evidence="5 6">Krueppel-like factor luna</fullName>
    </recommendedName>
</protein>
<evidence type="ECO:0000255" key="1">
    <source>
        <dbReference type="PROSITE-ProRule" id="PRU00042"/>
    </source>
</evidence>
<evidence type="ECO:0000256" key="2">
    <source>
        <dbReference type="SAM" id="MobiDB-lite"/>
    </source>
</evidence>
<evidence type="ECO:0000269" key="3">
    <source>
    </source>
</evidence>
<evidence type="ECO:0000269" key="4">
    <source>
    </source>
</evidence>
<evidence type="ECO:0000303" key="5">
    <source>
    </source>
</evidence>
<evidence type="ECO:0000303" key="6">
    <source>
    </source>
</evidence>
<evidence type="ECO:0000305" key="7"/>
<evidence type="ECO:0000305" key="8">
    <source>
    </source>
</evidence>
<evidence type="ECO:0000312" key="9">
    <source>
        <dbReference type="EMBL" id="AAM52655.1"/>
    </source>
</evidence>
<evidence type="ECO:0000312" key="10">
    <source>
        <dbReference type="EMBL" id="AAO85420.1"/>
    </source>
</evidence>
<evidence type="ECO:0000312" key="11">
    <source>
        <dbReference type="FlyBase" id="FBgn0040765"/>
    </source>
</evidence>
<evidence type="ECO:0000312" key="12">
    <source>
        <dbReference type="Proteomes" id="UP000000803"/>
    </source>
</evidence>
<comment type="function">
    <text evidence="3 4">Probable transcription factor that is required for cell differentiation (PubMed:14527717, PubMed:24915236). Essential for proper separation of the sister chromatids during early nuclear division cycles in the syncytial pre-blastoderm embryo (PubMed:24915236).</text>
</comment>
<comment type="subcellular location">
    <subcellularLocation>
        <location evidence="8">Nucleus</location>
    </subcellularLocation>
</comment>
<comment type="developmental stage">
    <text evidence="3">Expressed in embryos.</text>
</comment>
<comment type="disruption phenotype">
    <text evidence="3">RNAi-mediated knockdown in embryos is semi-lethal, with half of the mutants dying prior to gastrulation and display numerous vacuoles. Escaper embryos die at the third instar larval or early pupal stages, displaying black necrotic plaques.</text>
</comment>
<comment type="miscellaneous">
    <text evidence="5">Named 'luna' based upon mutant embryo phenotype in which large vacuoles formed in the egg yolk resemble the lunar surface.</text>
</comment>
<comment type="similarity">
    <text evidence="7">Belongs to the krueppel C2H2-type zinc-finger protein family.</text>
</comment>
<reference evidence="10" key="1">
    <citation type="journal article" date="2003" name="Gene">
        <title>Identification of the Drosophila progenitor of mammalian Kruppel-like factors 6 and 7 and a determinant of fly development.</title>
        <authorList>
            <person name="De Graeve F."/>
            <person name="Smaldone S."/>
            <person name="Laub F."/>
            <person name="Mlodzik M."/>
            <person name="Bhat M."/>
            <person name="Ramirez F."/>
        </authorList>
    </citation>
    <scope>NUCLEOTIDE SEQUENCE [MRNA]</scope>
    <scope>FUNCTION</scope>
    <scope>DEVELOPMENTAL STAGE</scope>
    <scope>DISRUPTION PHENOTYPE</scope>
</reference>
<reference evidence="12" key="2">
    <citation type="journal article" date="2000" name="Science">
        <title>The genome sequence of Drosophila melanogaster.</title>
        <authorList>
            <person name="Adams M.D."/>
            <person name="Celniker S.E."/>
            <person name="Holt R.A."/>
            <person name="Evans C.A."/>
            <person name="Gocayne J.D."/>
            <person name="Amanatides P.G."/>
            <person name="Scherer S.E."/>
            <person name="Li P.W."/>
            <person name="Hoskins R.A."/>
            <person name="Galle R.F."/>
            <person name="George R.A."/>
            <person name="Lewis S.E."/>
            <person name="Richards S."/>
            <person name="Ashburner M."/>
            <person name="Henderson S.N."/>
            <person name="Sutton G.G."/>
            <person name="Wortman J.R."/>
            <person name="Yandell M.D."/>
            <person name="Zhang Q."/>
            <person name="Chen L.X."/>
            <person name="Brandon R.C."/>
            <person name="Rogers Y.-H.C."/>
            <person name="Blazej R.G."/>
            <person name="Champe M."/>
            <person name="Pfeiffer B.D."/>
            <person name="Wan K.H."/>
            <person name="Doyle C."/>
            <person name="Baxter E.G."/>
            <person name="Helt G."/>
            <person name="Nelson C.R."/>
            <person name="Miklos G.L.G."/>
            <person name="Abril J.F."/>
            <person name="Agbayani A."/>
            <person name="An H.-J."/>
            <person name="Andrews-Pfannkoch C."/>
            <person name="Baldwin D."/>
            <person name="Ballew R.M."/>
            <person name="Basu A."/>
            <person name="Baxendale J."/>
            <person name="Bayraktaroglu L."/>
            <person name="Beasley E.M."/>
            <person name="Beeson K.Y."/>
            <person name="Benos P.V."/>
            <person name="Berman B.P."/>
            <person name="Bhandari D."/>
            <person name="Bolshakov S."/>
            <person name="Borkova D."/>
            <person name="Botchan M.R."/>
            <person name="Bouck J."/>
            <person name="Brokstein P."/>
            <person name="Brottier P."/>
            <person name="Burtis K.C."/>
            <person name="Busam D.A."/>
            <person name="Butler H."/>
            <person name="Cadieu E."/>
            <person name="Center A."/>
            <person name="Chandra I."/>
            <person name="Cherry J.M."/>
            <person name="Cawley S."/>
            <person name="Dahlke C."/>
            <person name="Davenport L.B."/>
            <person name="Davies P."/>
            <person name="de Pablos B."/>
            <person name="Delcher A."/>
            <person name="Deng Z."/>
            <person name="Mays A.D."/>
            <person name="Dew I."/>
            <person name="Dietz S.M."/>
            <person name="Dodson K."/>
            <person name="Doup L.E."/>
            <person name="Downes M."/>
            <person name="Dugan-Rocha S."/>
            <person name="Dunkov B.C."/>
            <person name="Dunn P."/>
            <person name="Durbin K.J."/>
            <person name="Evangelista C.C."/>
            <person name="Ferraz C."/>
            <person name="Ferriera S."/>
            <person name="Fleischmann W."/>
            <person name="Fosler C."/>
            <person name="Gabrielian A.E."/>
            <person name="Garg N.S."/>
            <person name="Gelbart W.M."/>
            <person name="Glasser K."/>
            <person name="Glodek A."/>
            <person name="Gong F."/>
            <person name="Gorrell J.H."/>
            <person name="Gu Z."/>
            <person name="Guan P."/>
            <person name="Harris M."/>
            <person name="Harris N.L."/>
            <person name="Harvey D.A."/>
            <person name="Heiman T.J."/>
            <person name="Hernandez J.R."/>
            <person name="Houck J."/>
            <person name="Hostin D."/>
            <person name="Houston K.A."/>
            <person name="Howland T.J."/>
            <person name="Wei M.-H."/>
            <person name="Ibegwam C."/>
            <person name="Jalali M."/>
            <person name="Kalush F."/>
            <person name="Karpen G.H."/>
            <person name="Ke Z."/>
            <person name="Kennison J.A."/>
            <person name="Ketchum K.A."/>
            <person name="Kimmel B.E."/>
            <person name="Kodira C.D."/>
            <person name="Kraft C.L."/>
            <person name="Kravitz S."/>
            <person name="Kulp D."/>
            <person name="Lai Z."/>
            <person name="Lasko P."/>
            <person name="Lei Y."/>
            <person name="Levitsky A.A."/>
            <person name="Li J.H."/>
            <person name="Li Z."/>
            <person name="Liang Y."/>
            <person name="Lin X."/>
            <person name="Liu X."/>
            <person name="Mattei B."/>
            <person name="McIntosh T.C."/>
            <person name="McLeod M.P."/>
            <person name="McPherson D."/>
            <person name="Merkulov G."/>
            <person name="Milshina N.V."/>
            <person name="Mobarry C."/>
            <person name="Morris J."/>
            <person name="Moshrefi A."/>
            <person name="Mount S.M."/>
            <person name="Moy M."/>
            <person name="Murphy B."/>
            <person name="Murphy L."/>
            <person name="Muzny D.M."/>
            <person name="Nelson D.L."/>
            <person name="Nelson D.R."/>
            <person name="Nelson K.A."/>
            <person name="Nixon K."/>
            <person name="Nusskern D.R."/>
            <person name="Pacleb J.M."/>
            <person name="Palazzolo M."/>
            <person name="Pittman G.S."/>
            <person name="Pan S."/>
            <person name="Pollard J."/>
            <person name="Puri V."/>
            <person name="Reese M.G."/>
            <person name="Reinert K."/>
            <person name="Remington K."/>
            <person name="Saunders R.D.C."/>
            <person name="Scheeler F."/>
            <person name="Shen H."/>
            <person name="Shue B.C."/>
            <person name="Siden-Kiamos I."/>
            <person name="Simpson M."/>
            <person name="Skupski M.P."/>
            <person name="Smith T.J."/>
            <person name="Spier E."/>
            <person name="Spradling A.C."/>
            <person name="Stapleton M."/>
            <person name="Strong R."/>
            <person name="Sun E."/>
            <person name="Svirskas R."/>
            <person name="Tector C."/>
            <person name="Turner R."/>
            <person name="Venter E."/>
            <person name="Wang A.H."/>
            <person name="Wang X."/>
            <person name="Wang Z.-Y."/>
            <person name="Wassarman D.A."/>
            <person name="Weinstock G.M."/>
            <person name="Weissenbach J."/>
            <person name="Williams S.M."/>
            <person name="Woodage T."/>
            <person name="Worley K.C."/>
            <person name="Wu D."/>
            <person name="Yang S."/>
            <person name="Yao Q.A."/>
            <person name="Ye J."/>
            <person name="Yeh R.-F."/>
            <person name="Zaveri J.S."/>
            <person name="Zhan M."/>
            <person name="Zhang G."/>
            <person name="Zhao Q."/>
            <person name="Zheng L."/>
            <person name="Zheng X.H."/>
            <person name="Zhong F.N."/>
            <person name="Zhong W."/>
            <person name="Zhou X."/>
            <person name="Zhu S.C."/>
            <person name="Zhu X."/>
            <person name="Smith H.O."/>
            <person name="Gibbs R.A."/>
            <person name="Myers E.W."/>
            <person name="Rubin G.M."/>
            <person name="Venter J.C."/>
        </authorList>
    </citation>
    <scope>NUCLEOTIDE SEQUENCE [LARGE SCALE GENOMIC DNA]</scope>
    <source>
        <strain>Berkeley</strain>
    </source>
</reference>
<reference evidence="12" key="3">
    <citation type="journal article" date="2002" name="Genome Biol.">
        <title>Annotation of the Drosophila melanogaster euchromatic genome: a systematic review.</title>
        <authorList>
            <person name="Misra S."/>
            <person name="Crosby M.A."/>
            <person name="Mungall C.J."/>
            <person name="Matthews B.B."/>
            <person name="Campbell K.S."/>
            <person name="Hradecky P."/>
            <person name="Huang Y."/>
            <person name="Kaminker J.S."/>
            <person name="Millburn G.H."/>
            <person name="Prochnik S.E."/>
            <person name="Smith C.D."/>
            <person name="Tupy J.L."/>
            <person name="Whitfield E.J."/>
            <person name="Bayraktaroglu L."/>
            <person name="Berman B.P."/>
            <person name="Bettencourt B.R."/>
            <person name="Celniker S.E."/>
            <person name="de Grey A.D.N.J."/>
            <person name="Drysdale R.A."/>
            <person name="Harris N.L."/>
            <person name="Richter J."/>
            <person name="Russo S."/>
            <person name="Schroeder A.J."/>
            <person name="Shu S.Q."/>
            <person name="Stapleton M."/>
            <person name="Yamada C."/>
            <person name="Ashburner M."/>
            <person name="Gelbart W.M."/>
            <person name="Rubin G.M."/>
            <person name="Lewis S.E."/>
        </authorList>
    </citation>
    <scope>GENOME REANNOTATION</scope>
    <source>
        <strain evidence="12">Berkeley</strain>
    </source>
</reference>
<reference evidence="9" key="4">
    <citation type="submission" date="2002-06" db="EMBL/GenBank/DDBJ databases">
        <authorList>
            <person name="Stapleton M."/>
            <person name="Brokstein P."/>
            <person name="Hong L."/>
            <person name="Agbayani A."/>
            <person name="Carlson J."/>
            <person name="Champe M."/>
            <person name="Chavez C."/>
            <person name="Dorsett V."/>
            <person name="Dresnek D."/>
            <person name="Farfan D."/>
            <person name="Frise E."/>
            <person name="George R."/>
            <person name="Gonzalez M."/>
            <person name="Guarin H."/>
            <person name="Kronmiller B."/>
            <person name="Li P."/>
            <person name="Liao G."/>
            <person name="Miranda A."/>
            <person name="Mungall C.J."/>
            <person name="Nunoo J."/>
            <person name="Pacleb J."/>
            <person name="Paragas V."/>
            <person name="Park S."/>
            <person name="Patel S."/>
            <person name="Phouanenavong S."/>
            <person name="Wan K."/>
            <person name="Yu C."/>
            <person name="Lewis S.E."/>
            <person name="Rubin G.M."/>
            <person name="Celniker S."/>
        </authorList>
    </citation>
    <scope>NUCLEOTIDE SEQUENCE [LARGE SCALE MRNA]</scope>
    <source>
        <strain evidence="9">Berkeley</strain>
    </source>
</reference>
<reference evidence="7" key="5">
    <citation type="journal article" date="2014" name="PLoS ONE">
        <title>Luna, a Drosophila KLF6/KLF7, is maternally required for synchronized nuclear and centrosome cycles in the preblastoderm embryo.</title>
        <authorList>
            <person name="Weber U."/>
            <person name="Rodriguez E."/>
            <person name="Martignetti J."/>
            <person name="Mlodzik M."/>
        </authorList>
    </citation>
    <scope>FUNCTION</scope>
</reference>
<dbReference type="EMBL" id="AF461497">
    <property type="protein sequence ID" value="AAO85420.1"/>
    <property type="molecule type" value="mRNA"/>
</dbReference>
<dbReference type="EMBL" id="AE013599">
    <property type="protein sequence ID" value="AAF58723.3"/>
    <property type="molecule type" value="Genomic_DNA"/>
</dbReference>
<dbReference type="EMBL" id="AE013599">
    <property type="protein sequence ID" value="AGB93412.1"/>
    <property type="molecule type" value="Genomic_DNA"/>
</dbReference>
<dbReference type="EMBL" id="AE013599">
    <property type="protein sequence ID" value="AHN56101.1"/>
    <property type="molecule type" value="Genomic_DNA"/>
</dbReference>
<dbReference type="EMBL" id="AY122143">
    <property type="protein sequence ID" value="AAM52655.1"/>
    <property type="molecule type" value="mRNA"/>
</dbReference>
<dbReference type="RefSeq" id="NP_001260879.1">
    <property type="nucleotide sequence ID" value="NM_001273950.1"/>
</dbReference>
<dbReference type="RefSeq" id="NP_001286303.1">
    <property type="nucleotide sequence ID" value="NM_001299374.1"/>
</dbReference>
<dbReference type="RefSeq" id="NP_995811.1">
    <property type="nucleotide sequence ID" value="NM_206089.2"/>
</dbReference>
<dbReference type="SMR" id="Q8MR37"/>
<dbReference type="FunCoup" id="Q8MR37">
    <property type="interactions" value="182"/>
</dbReference>
<dbReference type="IntAct" id="Q8MR37">
    <property type="interactions" value="1"/>
</dbReference>
<dbReference type="STRING" id="7227.FBpp0305280"/>
<dbReference type="PaxDb" id="7227-FBpp0305280"/>
<dbReference type="DNASU" id="2768719"/>
<dbReference type="EnsemblMetazoa" id="FBtr0088210">
    <property type="protein sequence ID" value="FBpp0087305"/>
    <property type="gene ID" value="FBgn0040765"/>
</dbReference>
<dbReference type="EnsemblMetazoa" id="FBtr0333066">
    <property type="protein sequence ID" value="FBpp0305280"/>
    <property type="gene ID" value="FBgn0040765"/>
</dbReference>
<dbReference type="EnsemblMetazoa" id="FBtr0345675">
    <property type="protein sequence ID" value="FBpp0311726"/>
    <property type="gene ID" value="FBgn0040765"/>
</dbReference>
<dbReference type="GeneID" id="2768719"/>
<dbReference type="KEGG" id="dme:Dmel_CG33473"/>
<dbReference type="UCSC" id="CG33473-RB">
    <property type="organism name" value="d. melanogaster"/>
</dbReference>
<dbReference type="AGR" id="FB:FBgn0040765"/>
<dbReference type="CTD" id="2768719"/>
<dbReference type="FlyBase" id="FBgn0040765">
    <property type="gene designation" value="luna"/>
</dbReference>
<dbReference type="VEuPathDB" id="VectorBase:FBgn0040765"/>
<dbReference type="eggNOG" id="KOG1721">
    <property type="taxonomic scope" value="Eukaryota"/>
</dbReference>
<dbReference type="GeneTree" id="ENSGT00940000170669"/>
<dbReference type="HOGENOM" id="CLU_487692_0_0_1"/>
<dbReference type="InParanoid" id="Q8MR37"/>
<dbReference type="OMA" id="NHNNIPR"/>
<dbReference type="OrthoDB" id="4748970at2759"/>
<dbReference type="PhylomeDB" id="Q8MR37"/>
<dbReference type="SignaLink" id="Q8MR37"/>
<dbReference type="BioGRID-ORCS" id="2768719">
    <property type="hits" value="0 hits in 3 CRISPR screens"/>
</dbReference>
<dbReference type="GenomeRNAi" id="2768719"/>
<dbReference type="PRO" id="PR:Q8MR37"/>
<dbReference type="Proteomes" id="UP000000803">
    <property type="component" value="Chromosome 2R"/>
</dbReference>
<dbReference type="Bgee" id="FBgn0040765">
    <property type="expression patterns" value="Expressed in spermatocyte cyst cell (Drosophila) in testis and 266 other cell types or tissues"/>
</dbReference>
<dbReference type="GO" id="GO:0005634">
    <property type="term" value="C:nucleus"/>
    <property type="evidence" value="ECO:0007669"/>
    <property type="project" value="UniProtKB-SubCell"/>
</dbReference>
<dbReference type="GO" id="GO:0000981">
    <property type="term" value="F:DNA-binding transcription factor activity, RNA polymerase II-specific"/>
    <property type="evidence" value="ECO:0000318"/>
    <property type="project" value="GO_Central"/>
</dbReference>
<dbReference type="GO" id="GO:0000978">
    <property type="term" value="F:RNA polymerase II cis-regulatory region sequence-specific DNA binding"/>
    <property type="evidence" value="ECO:0000318"/>
    <property type="project" value="GO_Central"/>
</dbReference>
<dbReference type="GO" id="GO:0043565">
    <property type="term" value="F:sequence-specific DNA binding"/>
    <property type="evidence" value="ECO:0000314"/>
    <property type="project" value="FlyBase"/>
</dbReference>
<dbReference type="GO" id="GO:0008270">
    <property type="term" value="F:zinc ion binding"/>
    <property type="evidence" value="ECO:0007669"/>
    <property type="project" value="UniProtKB-KW"/>
</dbReference>
<dbReference type="GO" id="GO:0051301">
    <property type="term" value="P:cell division"/>
    <property type="evidence" value="ECO:0007669"/>
    <property type="project" value="UniProtKB-KW"/>
</dbReference>
<dbReference type="GO" id="GO:0000070">
    <property type="term" value="P:mitotic sister chromatid segregation"/>
    <property type="evidence" value="ECO:0000315"/>
    <property type="project" value="FlyBase"/>
</dbReference>
<dbReference type="GO" id="GO:0035185">
    <property type="term" value="P:preblastoderm mitotic cell cycle"/>
    <property type="evidence" value="ECO:0000315"/>
    <property type="project" value="FlyBase"/>
</dbReference>
<dbReference type="GO" id="GO:0006357">
    <property type="term" value="P:regulation of transcription by RNA polymerase II"/>
    <property type="evidence" value="ECO:0000318"/>
    <property type="project" value="GO_Central"/>
</dbReference>
<dbReference type="CDD" id="cd21973">
    <property type="entry name" value="KLF6_7_N-like"/>
    <property type="match status" value="1"/>
</dbReference>
<dbReference type="FunFam" id="3.30.160.60:FF:000021">
    <property type="entry name" value="Basic krueppel-like factor 3"/>
    <property type="match status" value="1"/>
</dbReference>
<dbReference type="FunFam" id="3.30.160.60:FF:000018">
    <property type="entry name" value="Krueppel-like factor 15"/>
    <property type="match status" value="1"/>
</dbReference>
<dbReference type="FunFam" id="3.30.160.60:FF:000624">
    <property type="entry name" value="zinc finger protein 697"/>
    <property type="match status" value="1"/>
</dbReference>
<dbReference type="Gene3D" id="3.30.160.60">
    <property type="entry name" value="Classic Zinc Finger"/>
    <property type="match status" value="3"/>
</dbReference>
<dbReference type="InterPro" id="IPR036236">
    <property type="entry name" value="Znf_C2H2_sf"/>
</dbReference>
<dbReference type="InterPro" id="IPR013087">
    <property type="entry name" value="Znf_C2H2_type"/>
</dbReference>
<dbReference type="PANTHER" id="PTHR23235:SF150">
    <property type="entry name" value="KRUEPPEL-LIKE FACTOR LUNA"/>
    <property type="match status" value="1"/>
</dbReference>
<dbReference type="PANTHER" id="PTHR23235">
    <property type="entry name" value="KRUEPPEL-LIKE TRANSCRIPTION FACTOR"/>
    <property type="match status" value="1"/>
</dbReference>
<dbReference type="Pfam" id="PF00096">
    <property type="entry name" value="zf-C2H2"/>
    <property type="match status" value="3"/>
</dbReference>
<dbReference type="SMART" id="SM00355">
    <property type="entry name" value="ZnF_C2H2"/>
    <property type="match status" value="3"/>
</dbReference>
<dbReference type="SUPFAM" id="SSF57667">
    <property type="entry name" value="beta-beta-alpha zinc fingers"/>
    <property type="match status" value="2"/>
</dbReference>
<dbReference type="PROSITE" id="PS00028">
    <property type="entry name" value="ZINC_FINGER_C2H2_1"/>
    <property type="match status" value="3"/>
</dbReference>
<dbReference type="PROSITE" id="PS50157">
    <property type="entry name" value="ZINC_FINGER_C2H2_2"/>
    <property type="match status" value="3"/>
</dbReference>
<proteinExistence type="evidence at transcript level"/>
<gene>
    <name evidence="11" type="primary">luna</name>
    <name evidence="11" type="ORF">CG33473</name>
</gene>
<accession>Q8MR37</accession>
<sequence>MDILPSGNIFSELERICTTGYYSSQPSIEDQWQQTCYELERYLRDEPKLQKKMHSNLDNPWDIFSTPARLLEELKIKEQHLDTISTTSSVSSNCSGTSWDSNGSQALSCSVLVKQERIDEEDDDVGCDDKLSVLLAAPPSAISPNPSIGSAGNMTPTSISNSSSISSSNSHSNSNGNTTGSSNIIASPLSSLGSGSTITVSSRNSSAPGIKVRVVQAKNHPGSNARMHLGHVQDFVLPTLTPPSSPESNLRSHNYAQQLEANDLAALIQQQQQQQQQQQQQQQQQQLNPQPGNSTPATAILRFTSQSNPTMTQLQQQQQQLAVQHLSISPQALGHSNIGSNSPKSSSSSSSNSSNSSSSSHSSSSSISGSSDQPTHSNIPRSTIVRLTTANGKPGAAGISLARVIQMQNNGNANVAAVLSAAANSGSSNSNSNSSSSNTSSNSINTATPQQQVLSQRSEKSANGSSKPHHPRQHHSDHSPDAKRRIHKCQFLGCKKVYTKSSHLKAHQRTHTGEKPYKCSWEGCEWRFARSDELTRHYRKHTGAKPFKCRNCDRCFSRSDHLALHMKRHM</sequence>
<organism evidence="12">
    <name type="scientific">Drosophila melanogaster</name>
    <name type="common">Fruit fly</name>
    <dbReference type="NCBI Taxonomy" id="7227"/>
    <lineage>
        <taxon>Eukaryota</taxon>
        <taxon>Metazoa</taxon>
        <taxon>Ecdysozoa</taxon>
        <taxon>Arthropoda</taxon>
        <taxon>Hexapoda</taxon>
        <taxon>Insecta</taxon>
        <taxon>Pterygota</taxon>
        <taxon>Neoptera</taxon>
        <taxon>Endopterygota</taxon>
        <taxon>Diptera</taxon>
        <taxon>Brachycera</taxon>
        <taxon>Muscomorpha</taxon>
        <taxon>Ephydroidea</taxon>
        <taxon>Drosophilidae</taxon>
        <taxon>Drosophila</taxon>
        <taxon>Sophophora</taxon>
    </lineage>
</organism>
<feature type="chain" id="PRO_0000437247" description="Krueppel-like factor luna" evidence="7">
    <location>
        <begin position="1"/>
        <end position="570"/>
    </location>
</feature>
<feature type="zinc finger region" description="C2H2-type 1" evidence="1">
    <location>
        <begin position="487"/>
        <end position="511"/>
    </location>
</feature>
<feature type="zinc finger region" description="C2H2-type 2" evidence="1">
    <location>
        <begin position="517"/>
        <end position="541"/>
    </location>
</feature>
<feature type="zinc finger region" description="C2H2-type 3" evidence="1">
    <location>
        <begin position="547"/>
        <end position="569"/>
    </location>
</feature>
<feature type="region of interest" description="Disordered" evidence="2">
    <location>
        <begin position="138"/>
        <end position="182"/>
    </location>
</feature>
<feature type="region of interest" description="Disordered" evidence="2">
    <location>
        <begin position="268"/>
        <end position="297"/>
    </location>
</feature>
<feature type="region of interest" description="Disordered" evidence="2">
    <location>
        <begin position="332"/>
        <end position="383"/>
    </location>
</feature>
<feature type="region of interest" description="Disordered" evidence="2">
    <location>
        <begin position="424"/>
        <end position="483"/>
    </location>
</feature>
<feature type="compositionally biased region" description="Low complexity" evidence="2">
    <location>
        <begin position="269"/>
        <end position="286"/>
    </location>
</feature>
<feature type="compositionally biased region" description="Polar residues" evidence="2">
    <location>
        <begin position="287"/>
        <end position="297"/>
    </location>
</feature>
<feature type="compositionally biased region" description="Low complexity" evidence="2">
    <location>
        <begin position="335"/>
        <end position="371"/>
    </location>
</feature>
<feature type="compositionally biased region" description="Polar residues" evidence="2">
    <location>
        <begin position="372"/>
        <end position="383"/>
    </location>
</feature>
<feature type="compositionally biased region" description="Low complexity" evidence="2">
    <location>
        <begin position="424"/>
        <end position="447"/>
    </location>
</feature>
<feature type="compositionally biased region" description="Polar residues" evidence="2">
    <location>
        <begin position="448"/>
        <end position="466"/>
    </location>
</feature>
<feature type="compositionally biased region" description="Basic and acidic residues" evidence="2">
    <location>
        <begin position="474"/>
        <end position="483"/>
    </location>
</feature>
<keyword id="KW-0131">Cell cycle</keyword>
<keyword id="KW-0132">Cell division</keyword>
<keyword id="KW-0217">Developmental protein</keyword>
<keyword id="KW-0479">Metal-binding</keyword>
<keyword id="KW-0498">Mitosis</keyword>
<keyword id="KW-0539">Nucleus</keyword>
<keyword id="KW-1185">Reference proteome</keyword>
<keyword id="KW-0677">Repeat</keyword>
<keyword id="KW-0862">Zinc</keyword>
<keyword id="KW-0863">Zinc-finger</keyword>